<comment type="function">
    <text evidence="1 9 10 13">Plays an important role in blood vessel remodeling and angiogenesis. Not necessary for the initial formation of blood vessels, but is essential for their maintenance and remodeling. Can induce dephosphorylation of TEK/TIE2, CDH5/VE-cadherin and KDR/VEGFR-2. Regulates angiopoietin-TIE2 signaling in endothelial cells. Acts as a negative regulator of TIE2, and controls TIE2 driven endothelial cell proliferation, which in turn affects blood vessel remodeling during embryonic development and determines blood vessel size during perinatal growth. Essential for the maintenance of endothelial cell contact integrity and for the adhesive function of VE-cadherin in endothelial cells and this requires the presence of plakoglobin (By similarity).</text>
</comment>
<comment type="catalytic activity">
    <reaction evidence="6">
        <text>O-phospho-L-tyrosyl-[protein] + H2O = L-tyrosyl-[protein] + phosphate</text>
        <dbReference type="Rhea" id="RHEA:10684"/>
        <dbReference type="Rhea" id="RHEA-COMP:10136"/>
        <dbReference type="Rhea" id="RHEA-COMP:20101"/>
        <dbReference type="ChEBI" id="CHEBI:15377"/>
        <dbReference type="ChEBI" id="CHEBI:43474"/>
        <dbReference type="ChEBI" id="CHEBI:46858"/>
        <dbReference type="ChEBI" id="CHEBI:61978"/>
        <dbReference type="EC" id="3.1.3.48"/>
    </reaction>
</comment>
<comment type="subunit">
    <text evidence="2 11 13">Monomer. Interacts with TEK (PubMed:19451274). Interacts via fibronectin type-III 17 domain with CDH5. Detected in a complex with CNTN1 and NRCAM (By similarity). Interacts (phosphorylated form) with FYN and GRB2 (By similarity). Interacts with IGFBP2 (PubMed:22869525).</text>
</comment>
<comment type="interaction">
    <interactant intactId="EBI-1265766">
        <id>P23467</id>
    </interactant>
    <interactant intactId="EBI-297353">
        <id>P00533</id>
        <label>EGFR</label>
    </interactant>
    <organismsDiffer>false</organismsDiffer>
    <experiments>3</experiments>
</comment>
<comment type="interaction">
    <interactant intactId="EBI-1265766">
        <id>P23467</id>
    </interactant>
    <interactant intactId="EBI-641062">
        <id>P04626</id>
        <label>ERBB2</label>
    </interactant>
    <organismsDiffer>false</organismsDiffer>
    <experiments>2</experiments>
</comment>
<comment type="interaction">
    <interactant intactId="EBI-1265766">
        <id>P23467</id>
    </interactant>
    <interactant intactId="EBI-286316">
        <id>P10912</id>
        <label>GHR</label>
    </interactant>
    <organismsDiffer>false</organismsDiffer>
    <experiments>3</experiments>
</comment>
<comment type="interaction">
    <interactant intactId="EBI-1265766">
        <id>P23467</id>
    </interactant>
    <interactant intactId="EBI-73995">
        <id>P27361</id>
        <label>MAPK3</label>
    </interactant>
    <organismsDiffer>false</organismsDiffer>
    <experiments>2</experiments>
</comment>
<comment type="interaction">
    <interactant intactId="EBI-1265766">
        <id>P23467</id>
    </interactant>
    <interactant intactId="EBI-1039152">
        <id>P08581</id>
        <label>MET</label>
    </interactant>
    <organismsDiffer>false</organismsDiffer>
    <experiments>2</experiments>
</comment>
<comment type="interaction">
    <interactant intactId="EBI-1265766">
        <id>P23467</id>
    </interactant>
    <interactant intactId="EBI-2257090">
        <id>Q02763</id>
        <label>TEK</label>
    </interactant>
    <organismsDiffer>false</organismsDiffer>
    <experiments>3</experiments>
</comment>
<comment type="subcellular location">
    <subcellularLocation>
        <location evidence="16">Membrane</location>
        <topology evidence="16">Single-pass type I membrane protein</topology>
    </subcellularLocation>
</comment>
<comment type="alternative products">
    <event type="alternative splicing"/>
    <isoform>
        <id>P23467-1</id>
        <name>1</name>
        <sequence type="displayed"/>
    </isoform>
    <isoform>
        <id>P23467-2</id>
        <name>2</name>
        <sequence type="described" ref="VSP_038521"/>
    </isoform>
    <isoform>
        <id>P23467-3</id>
        <name>3</name>
        <sequence type="described" ref="VSP_040484"/>
    </isoform>
    <isoform>
        <id>P23467-4</id>
        <name>4</name>
        <sequence type="described" ref="VSP_053944"/>
    </isoform>
</comment>
<comment type="induction">
    <text evidence="9">Up-regulated by hypoxia.</text>
</comment>
<comment type="similarity">
    <text evidence="16">Belongs to the protein-tyrosine phosphatase family. Receptor class 3 subfamily.</text>
</comment>
<organism>
    <name type="scientific">Homo sapiens</name>
    <name type="common">Human</name>
    <dbReference type="NCBI Taxonomy" id="9606"/>
    <lineage>
        <taxon>Eukaryota</taxon>
        <taxon>Metazoa</taxon>
        <taxon>Chordata</taxon>
        <taxon>Craniata</taxon>
        <taxon>Vertebrata</taxon>
        <taxon>Euteleostomi</taxon>
        <taxon>Mammalia</taxon>
        <taxon>Eutheria</taxon>
        <taxon>Euarchontoglires</taxon>
        <taxon>Primates</taxon>
        <taxon>Haplorrhini</taxon>
        <taxon>Catarrhini</taxon>
        <taxon>Hominidae</taxon>
        <taxon>Homo</taxon>
    </lineage>
</organism>
<protein>
    <recommendedName>
        <fullName>Receptor-type tyrosine-protein phosphatase beta</fullName>
        <shortName>Protein-tyrosine phosphatase beta</shortName>
        <shortName>R-PTP-beta</shortName>
        <ecNumber>3.1.3.48</ecNumber>
    </recommendedName>
    <alternativeName>
        <fullName>Vascular endothelial protein tyrosine phosphatase</fullName>
        <shortName>VE-PTP</shortName>
    </alternativeName>
</protein>
<proteinExistence type="evidence at protein level"/>
<keyword id="KW-0002">3D-structure</keyword>
<keyword id="KW-0025">Alternative splicing</keyword>
<keyword id="KW-0037">Angiogenesis</keyword>
<keyword id="KW-0325">Glycoprotein</keyword>
<keyword id="KW-0378">Hydrolase</keyword>
<keyword id="KW-0472">Membrane</keyword>
<keyword id="KW-0597">Phosphoprotein</keyword>
<keyword id="KW-0904">Protein phosphatase</keyword>
<keyword id="KW-1267">Proteomics identification</keyword>
<keyword id="KW-1185">Reference proteome</keyword>
<keyword id="KW-0677">Repeat</keyword>
<keyword id="KW-0732">Signal</keyword>
<keyword id="KW-0812">Transmembrane</keyword>
<keyword id="KW-1133">Transmembrane helix</keyword>
<reference key="1">
    <citation type="journal article" date="1990" name="EMBO J.">
        <title>Structural diversity and evolution of human receptor-like protein tyrosine phosphatases.</title>
        <authorList>
            <person name="Krueger N.X."/>
            <person name="Streuli M."/>
            <person name="Saito H."/>
        </authorList>
    </citation>
    <scope>NUCLEOTIDE SEQUENCE [MRNA] (ISOFORM 1)</scope>
    <scope>VARIANTS LYS-94 AND GLY-127</scope>
    <source>
        <tissue>Placenta</tissue>
    </source>
</reference>
<reference key="2">
    <citation type="journal article" date="2007" name="BMC Genomics">
        <title>The full-ORF clone resource of the German cDNA consortium.</title>
        <authorList>
            <person name="Bechtel S."/>
            <person name="Rosenfelder H."/>
            <person name="Duda A."/>
            <person name="Schmidt C.P."/>
            <person name="Ernst U."/>
            <person name="Wellenreuther R."/>
            <person name="Mehrle A."/>
            <person name="Schuster C."/>
            <person name="Bahr A."/>
            <person name="Bloecker H."/>
            <person name="Heubner D."/>
            <person name="Hoerlein A."/>
            <person name="Michel G."/>
            <person name="Wedler H."/>
            <person name="Koehrer K."/>
            <person name="Ottenwaelder B."/>
            <person name="Poustka A."/>
            <person name="Wiemann S."/>
            <person name="Schupp I."/>
        </authorList>
    </citation>
    <scope>NUCLEOTIDE SEQUENCE [LARGE SCALE MRNA] (ISOFORM 3)</scope>
    <source>
        <tissue>Fetal kidney</tissue>
    </source>
</reference>
<reference key="3">
    <citation type="journal article" date="2006" name="Nature">
        <title>The finished DNA sequence of human chromosome 12.</title>
        <authorList>
            <person name="Scherer S.E."/>
            <person name="Muzny D.M."/>
            <person name="Buhay C.J."/>
            <person name="Chen R."/>
            <person name="Cree A."/>
            <person name="Ding Y."/>
            <person name="Dugan-Rocha S."/>
            <person name="Gill R."/>
            <person name="Gunaratne P."/>
            <person name="Harris R.A."/>
            <person name="Hawes A.C."/>
            <person name="Hernandez J."/>
            <person name="Hodgson A.V."/>
            <person name="Hume J."/>
            <person name="Jackson A."/>
            <person name="Khan Z.M."/>
            <person name="Kovar-Smith C."/>
            <person name="Lewis L.R."/>
            <person name="Lozado R.J."/>
            <person name="Metzker M.L."/>
            <person name="Milosavljevic A."/>
            <person name="Miner G.R."/>
            <person name="Montgomery K.T."/>
            <person name="Morgan M.B."/>
            <person name="Nazareth L.V."/>
            <person name="Scott G."/>
            <person name="Sodergren E."/>
            <person name="Song X.-Z."/>
            <person name="Steffen D."/>
            <person name="Lovering R.C."/>
            <person name="Wheeler D.A."/>
            <person name="Worley K.C."/>
            <person name="Yuan Y."/>
            <person name="Zhang Z."/>
            <person name="Adams C.Q."/>
            <person name="Ansari-Lari M.A."/>
            <person name="Ayele M."/>
            <person name="Brown M.J."/>
            <person name="Chen G."/>
            <person name="Chen Z."/>
            <person name="Clerc-Blankenburg K.P."/>
            <person name="Davis C."/>
            <person name="Delgado O."/>
            <person name="Dinh H.H."/>
            <person name="Draper H."/>
            <person name="Gonzalez-Garay M.L."/>
            <person name="Havlak P."/>
            <person name="Jackson L.R."/>
            <person name="Jacob L.S."/>
            <person name="Kelly S.H."/>
            <person name="Li L."/>
            <person name="Li Z."/>
            <person name="Liu J."/>
            <person name="Liu W."/>
            <person name="Lu J."/>
            <person name="Maheshwari M."/>
            <person name="Nguyen B.-V."/>
            <person name="Okwuonu G.O."/>
            <person name="Pasternak S."/>
            <person name="Perez L.M."/>
            <person name="Plopper F.J.H."/>
            <person name="Santibanez J."/>
            <person name="Shen H."/>
            <person name="Tabor P.E."/>
            <person name="Verduzco D."/>
            <person name="Waldron L."/>
            <person name="Wang Q."/>
            <person name="Williams G.A."/>
            <person name="Zhang J."/>
            <person name="Zhou J."/>
            <person name="Allen C.C."/>
            <person name="Amin A.G."/>
            <person name="Anyalebechi V."/>
            <person name="Bailey M."/>
            <person name="Barbaria J.A."/>
            <person name="Bimage K.E."/>
            <person name="Bryant N.P."/>
            <person name="Burch P.E."/>
            <person name="Burkett C.E."/>
            <person name="Burrell K.L."/>
            <person name="Calderon E."/>
            <person name="Cardenas V."/>
            <person name="Carter K."/>
            <person name="Casias K."/>
            <person name="Cavazos I."/>
            <person name="Cavazos S.R."/>
            <person name="Ceasar H."/>
            <person name="Chacko J."/>
            <person name="Chan S.N."/>
            <person name="Chavez D."/>
            <person name="Christopoulos C."/>
            <person name="Chu J."/>
            <person name="Cockrell R."/>
            <person name="Cox C.D."/>
            <person name="Dang M."/>
            <person name="Dathorne S.R."/>
            <person name="David R."/>
            <person name="Davis C.M."/>
            <person name="Davy-Carroll L."/>
            <person name="Deshazo D.R."/>
            <person name="Donlin J.E."/>
            <person name="D'Souza L."/>
            <person name="Eaves K.A."/>
            <person name="Egan A."/>
            <person name="Emery-Cohen A.J."/>
            <person name="Escotto M."/>
            <person name="Flagg N."/>
            <person name="Forbes L.D."/>
            <person name="Gabisi A.M."/>
            <person name="Garza M."/>
            <person name="Hamilton C."/>
            <person name="Henderson N."/>
            <person name="Hernandez O."/>
            <person name="Hines S."/>
            <person name="Hogues M.E."/>
            <person name="Huang M."/>
            <person name="Idlebird D.G."/>
            <person name="Johnson R."/>
            <person name="Jolivet A."/>
            <person name="Jones S."/>
            <person name="Kagan R."/>
            <person name="King L.M."/>
            <person name="Leal B."/>
            <person name="Lebow H."/>
            <person name="Lee S."/>
            <person name="LeVan J.M."/>
            <person name="Lewis L.C."/>
            <person name="London P."/>
            <person name="Lorensuhewa L.M."/>
            <person name="Loulseged H."/>
            <person name="Lovett D.A."/>
            <person name="Lucier A."/>
            <person name="Lucier R.L."/>
            <person name="Ma J."/>
            <person name="Madu R.C."/>
            <person name="Mapua P."/>
            <person name="Martindale A.D."/>
            <person name="Martinez E."/>
            <person name="Massey E."/>
            <person name="Mawhiney S."/>
            <person name="Meador M.G."/>
            <person name="Mendez S."/>
            <person name="Mercado C."/>
            <person name="Mercado I.C."/>
            <person name="Merritt C.E."/>
            <person name="Miner Z.L."/>
            <person name="Minja E."/>
            <person name="Mitchell T."/>
            <person name="Mohabbat F."/>
            <person name="Mohabbat K."/>
            <person name="Montgomery B."/>
            <person name="Moore N."/>
            <person name="Morris S."/>
            <person name="Munidasa M."/>
            <person name="Ngo R.N."/>
            <person name="Nguyen N.B."/>
            <person name="Nickerson E."/>
            <person name="Nwaokelemeh O.O."/>
            <person name="Nwokenkwo S."/>
            <person name="Obregon M."/>
            <person name="Oguh M."/>
            <person name="Oragunye N."/>
            <person name="Oviedo R.J."/>
            <person name="Parish B.J."/>
            <person name="Parker D.N."/>
            <person name="Parrish J."/>
            <person name="Parks K.L."/>
            <person name="Paul H.A."/>
            <person name="Payton B.A."/>
            <person name="Perez A."/>
            <person name="Perrin W."/>
            <person name="Pickens A."/>
            <person name="Primus E.L."/>
            <person name="Pu L.-L."/>
            <person name="Puazo M."/>
            <person name="Quiles M.M."/>
            <person name="Quiroz J.B."/>
            <person name="Rabata D."/>
            <person name="Reeves K."/>
            <person name="Ruiz S.J."/>
            <person name="Shao H."/>
            <person name="Sisson I."/>
            <person name="Sonaike T."/>
            <person name="Sorelle R.P."/>
            <person name="Sutton A.E."/>
            <person name="Svatek A.F."/>
            <person name="Svetz L.A."/>
            <person name="Tamerisa K.S."/>
            <person name="Taylor T.R."/>
            <person name="Teague B."/>
            <person name="Thomas N."/>
            <person name="Thorn R.D."/>
            <person name="Trejos Z.Y."/>
            <person name="Trevino B.K."/>
            <person name="Ukegbu O.N."/>
            <person name="Urban J.B."/>
            <person name="Vasquez L.I."/>
            <person name="Vera V.A."/>
            <person name="Villasana D.M."/>
            <person name="Wang L."/>
            <person name="Ward-Moore S."/>
            <person name="Warren J.T."/>
            <person name="Wei X."/>
            <person name="White F."/>
            <person name="Williamson A.L."/>
            <person name="Wleczyk R."/>
            <person name="Wooden H.S."/>
            <person name="Wooden S.H."/>
            <person name="Yen J."/>
            <person name="Yoon L."/>
            <person name="Yoon V."/>
            <person name="Zorrilla S.E."/>
            <person name="Nelson D."/>
            <person name="Kucherlapati R."/>
            <person name="Weinstock G."/>
            <person name="Gibbs R.A."/>
        </authorList>
    </citation>
    <scope>NUCLEOTIDE SEQUENCE [LARGE SCALE GENOMIC DNA]</scope>
</reference>
<reference key="4">
    <citation type="submission" date="2005-07" db="EMBL/GenBank/DDBJ databases">
        <authorList>
            <person name="Mural R.J."/>
            <person name="Istrail S."/>
            <person name="Sutton G.G."/>
            <person name="Florea L."/>
            <person name="Halpern A.L."/>
            <person name="Mobarry C.M."/>
            <person name="Lippert R."/>
            <person name="Walenz B."/>
            <person name="Shatkay H."/>
            <person name="Dew I."/>
            <person name="Miller J.R."/>
            <person name="Flanigan M.J."/>
            <person name="Edwards N.J."/>
            <person name="Bolanos R."/>
            <person name="Fasulo D."/>
            <person name="Halldorsson B.V."/>
            <person name="Hannenhalli S."/>
            <person name="Turner R."/>
            <person name="Yooseph S."/>
            <person name="Lu F."/>
            <person name="Nusskern D.R."/>
            <person name="Shue B.C."/>
            <person name="Zheng X.H."/>
            <person name="Zhong F."/>
            <person name="Delcher A.L."/>
            <person name="Huson D.H."/>
            <person name="Kravitz S.A."/>
            <person name="Mouchard L."/>
            <person name="Reinert K."/>
            <person name="Remington K.A."/>
            <person name="Clark A.G."/>
            <person name="Waterman M.S."/>
            <person name="Eichler E.E."/>
            <person name="Adams M.D."/>
            <person name="Hunkapiller M.W."/>
            <person name="Myers E.W."/>
            <person name="Venter J.C."/>
        </authorList>
    </citation>
    <scope>NUCLEOTIDE SEQUENCE [LARGE SCALE GENOMIC DNA]</scope>
</reference>
<reference key="5">
    <citation type="journal article" date="2004" name="Genome Res.">
        <title>The status, quality, and expansion of the NIH full-length cDNA project: the Mammalian Gene Collection (MGC).</title>
        <authorList>
            <consortium name="The MGC Project Team"/>
        </authorList>
    </citation>
    <scope>NUCLEOTIDE SEQUENCE [LARGE SCALE MRNA] (ISOFORMS 1; 2 AND 4)</scope>
    <scope>VARIANT LYS-94</scope>
    <source>
        <tissue>Colon</tissue>
    </source>
</reference>
<reference key="6">
    <citation type="journal article" date="2004" name="Anal. Chem.">
        <title>Robust phosphoproteomic profiling of tyrosine phosphorylation sites from human T cells using immobilized metal affinity chromatography and tandem mass spectrometry.</title>
        <authorList>
            <person name="Brill L.M."/>
            <person name="Salomon A.R."/>
            <person name="Ficarro S.B."/>
            <person name="Mukherji M."/>
            <person name="Stettler-Gill M."/>
            <person name="Peters E.C."/>
        </authorList>
    </citation>
    <scope>IDENTIFICATION BY MASS SPECTROMETRY [LARGE SCALE ANALYSIS]</scope>
    <source>
        <tissue>Leukemic T-cell</tissue>
    </source>
</reference>
<reference key="7">
    <citation type="journal article" date="2009" name="Angiogenesis">
        <title>Tyrosine phosphatase beta regulates angiopoietin-Tie2 signaling in human endothelial cells.</title>
        <authorList>
            <person name="Yacyshyn O.K."/>
            <person name="Lai P.F.H."/>
            <person name="Forse K."/>
            <person name="Teichert-Kuliszewska K."/>
            <person name="Jurasz P."/>
            <person name="Stewart D.J."/>
        </authorList>
    </citation>
    <scope>FUNCTION</scope>
    <scope>INDUCTION</scope>
</reference>
<reference key="8">
    <citation type="journal article" date="2009" name="FASEB J.">
        <title>Transcriptional profiling reveals a critical role for tyrosine phosphatase VE-PTP in regulation of VEGFR2 activity and endothelial cell morphogenesis.</title>
        <authorList>
            <person name="Mellberg S."/>
            <person name="Dimberg A."/>
            <person name="Bahram F."/>
            <person name="Hayashi M."/>
            <person name="Rennel E."/>
            <person name="Ameur A."/>
            <person name="Westholm J.O."/>
            <person name="Larsson E."/>
            <person name="Lindahl P."/>
            <person name="Cross M.J."/>
            <person name="Claesson-Welsh L."/>
        </authorList>
    </citation>
    <scope>FUNCTION</scope>
</reference>
<reference key="9">
    <citation type="journal article" date="2009" name="J. Cell Biol.">
        <title>VE-PTP controls blood vessel development by balancing Tie-2 activity.</title>
        <authorList>
            <person name="Winderlich M."/>
            <person name="Keller L."/>
            <person name="Cagna G."/>
            <person name="Broermann A."/>
            <person name="Kamenyeva O."/>
            <person name="Kiefer F."/>
            <person name="Deutsch U."/>
            <person name="Nottebaum A.F."/>
            <person name="Vestweber D."/>
        </authorList>
    </citation>
    <scope>INTERACTION WITH TEK</scope>
</reference>
<reference key="10">
    <citation type="journal article" date="2012" name="Mol. Cell. Biol.">
        <title>Insulin-like growth factor (IGF) binding protein 2 functions coordinately with receptor protein tyrosine phosphatase beta and the IGF-I receptor to regulate IGF-I-stimulated signaling.</title>
        <authorList>
            <person name="Shen X."/>
            <person name="Xi G."/>
            <person name="Maile L.A."/>
            <person name="Wai C."/>
            <person name="Rosen C.J."/>
            <person name="Clemmons D.R."/>
        </authorList>
    </citation>
    <scope>FUNCTION</scope>
    <scope>INTERACTION WITH IGFBP2</scope>
</reference>
<reference key="11">
    <citation type="journal article" date="2006" name="Acta Crystallogr. D">
        <title>Engineering the catalytic domain of human protein tyrosine phosphatase beta for structure-based drug discovery.</title>
        <authorList>
            <person name="Evdokimov A.G."/>
            <person name="Pokross M."/>
            <person name="Walter R."/>
            <person name="Mekel M."/>
            <person name="Cox B."/>
            <person name="Li C."/>
            <person name="Bechard R."/>
            <person name="Genbauffe F."/>
            <person name="Andrews R."/>
            <person name="Diven C."/>
            <person name="Howard B."/>
            <person name="Rastogi V."/>
            <person name="Gray J."/>
            <person name="Maier M."/>
            <person name="Peters K.G."/>
        </authorList>
    </citation>
    <scope>X-RAY CRYSTALLOGRAPHY (1.3 ANGSTROMS) OF 1676-1965 IN COMPLEX WITH INHIBITOR SULFAMIC ACID</scope>
    <scope>SUBUNIT</scope>
    <scope>ACTIVE SITE</scope>
</reference>
<reference key="12">
    <citation type="journal article" date="2006" name="Bioorg. Med. Chem. Lett.">
        <title>Design and synthesis of potent, non-peptidic inhibitors of HPTPbeta.</title>
        <authorList>
            <person name="Amarasinghe K.K.D."/>
            <person name="Evdokimov A.G."/>
            <person name="Xu K."/>
            <person name="Clark C.M."/>
            <person name="Maier M.B."/>
            <person name="Srivastava A."/>
            <person name="Colson A.-O."/>
            <person name="Gerwe G.S."/>
            <person name="Stake G.E."/>
            <person name="Howard B.W."/>
            <person name="Pokross M.E."/>
            <person name="Gray J.L."/>
            <person name="Peters K.G."/>
        </authorList>
    </citation>
    <scope>X-RAY CRYSTALLOGRAPHY (2.3 ANGSTROMS) OF 1662-1973 IN COMPLEX WITH INHIBITOR SULFAMIC ACID</scope>
</reference>
<reference key="13">
    <citation type="journal article" date="2009" name="Cell">
        <title>Large-scale structural analysis of the classical human protein tyrosine phosphatome.</title>
        <authorList>
            <person name="Barr A.J."/>
            <person name="Ugochukwu E."/>
            <person name="Lee W.H."/>
            <person name="King O.N.F."/>
            <person name="Filippakopoulos P."/>
            <person name="Alfano I."/>
            <person name="Savitsky P."/>
            <person name="Burgess-Brown N.A."/>
            <person name="Mueller S."/>
            <person name="Knapp S."/>
        </authorList>
    </citation>
    <scope>X-RAY CRYSTALLOGRAPHY (2.1 ANGSTROMS) OF 1686-1971</scope>
</reference>
<feature type="signal peptide" evidence="3">
    <location>
        <begin position="1"/>
        <end position="22"/>
    </location>
</feature>
<feature type="chain" id="PRO_0000025436" description="Receptor-type tyrosine-protein phosphatase beta">
    <location>
        <begin position="23"/>
        <end position="1997"/>
    </location>
</feature>
<feature type="topological domain" description="Extracellular" evidence="3">
    <location>
        <begin position="23"/>
        <end position="1621"/>
    </location>
</feature>
<feature type="transmembrane region" description="Helical" evidence="3">
    <location>
        <begin position="1622"/>
        <end position="1642"/>
    </location>
</feature>
<feature type="topological domain" description="Cytoplasmic" evidence="3">
    <location>
        <begin position="1643"/>
        <end position="1997"/>
    </location>
</feature>
<feature type="domain" description="Fibronectin type-III 1" evidence="5">
    <location>
        <begin position="23"/>
        <end position="111"/>
    </location>
</feature>
<feature type="domain" description="Fibronectin type-III 2" evidence="5">
    <location>
        <begin position="112"/>
        <end position="207"/>
    </location>
</feature>
<feature type="domain" description="Fibronectin type-III 3" evidence="5">
    <location>
        <begin position="203"/>
        <end position="288"/>
    </location>
</feature>
<feature type="domain" description="Fibronectin type-III 4" evidence="5">
    <location>
        <begin position="291"/>
        <end position="378"/>
    </location>
</feature>
<feature type="domain" description="Fibronectin type-III 5" evidence="5">
    <location>
        <begin position="379"/>
        <end position="471"/>
    </location>
</feature>
<feature type="domain" description="Fibronectin type-III 6" evidence="5">
    <location>
        <begin position="467"/>
        <end position="552"/>
    </location>
</feature>
<feature type="domain" description="Fibronectin type-III 7" evidence="5">
    <location>
        <begin position="556"/>
        <end position="641"/>
    </location>
</feature>
<feature type="domain" description="Fibronectin type-III 8" evidence="5">
    <location>
        <begin position="642"/>
        <end position="729"/>
    </location>
</feature>
<feature type="domain" description="Fibronectin type-III 9" evidence="5">
    <location>
        <begin position="730"/>
        <end position="829"/>
    </location>
</feature>
<feature type="domain" description="Fibronectin type-III 10" evidence="5">
    <location>
        <begin position="819"/>
        <end position="906"/>
    </location>
</feature>
<feature type="domain" description="Fibronectin type-III 11" evidence="5">
    <location>
        <begin position="909"/>
        <end position="1001"/>
    </location>
</feature>
<feature type="domain" description="Fibronectin type-III 12" evidence="5">
    <location>
        <begin position="995"/>
        <end position="1083"/>
    </location>
</feature>
<feature type="domain" description="Fibronectin type-III 13" evidence="5">
    <location>
        <begin position="1087"/>
        <end position="1175"/>
    </location>
</feature>
<feature type="domain" description="Fibronectin type-III 14" evidence="5">
    <location>
        <begin position="1173"/>
        <end position="1260"/>
    </location>
</feature>
<feature type="domain" description="Fibronectin type-III 15" evidence="5">
    <location>
        <begin position="1260"/>
        <end position="1356"/>
    </location>
</feature>
<feature type="domain" description="Fibronectin type-III 16" evidence="5">
    <location>
        <begin position="1357"/>
        <end position="1448"/>
    </location>
</feature>
<feature type="domain" description="Fibronectin type-III 17" evidence="5">
    <location>
        <begin position="1458"/>
        <end position="1554"/>
    </location>
</feature>
<feature type="domain" description="Tyrosine-protein phosphatase" evidence="4">
    <location>
        <begin position="1703"/>
        <end position="1963"/>
    </location>
</feature>
<feature type="active site" description="Phosphocysteine intermediate" evidence="4 6 8">
    <location>
        <position position="1904"/>
    </location>
</feature>
<feature type="binding site">
    <location>
        <position position="1870"/>
    </location>
    <ligand>
        <name>substrate</name>
    </ligand>
</feature>
<feature type="binding site" evidence="1">
    <location>
        <begin position="1904"/>
        <end position="1910"/>
    </location>
    <ligand>
        <name>substrate</name>
    </ligand>
</feature>
<feature type="binding site" evidence="1">
    <location>
        <position position="1948"/>
    </location>
    <ligand>
        <name>substrate</name>
    </ligand>
</feature>
<feature type="modified residue" description="Phosphotyrosine" evidence="2">
    <location>
        <position position="1981"/>
    </location>
</feature>
<feature type="glycosylation site" description="N-linked (GlcNAc...) asparagine" evidence="3">
    <location>
        <position position="28"/>
    </location>
</feature>
<feature type="glycosylation site" description="N-linked (GlcNAc...) asparagine" evidence="3">
    <location>
        <position position="53"/>
    </location>
</feature>
<feature type="glycosylation site" description="N-linked (GlcNAc...) asparagine" evidence="3">
    <location>
        <position position="75"/>
    </location>
</feature>
<feature type="glycosylation site" description="N-linked (GlcNAc...) asparagine" evidence="3">
    <location>
        <position position="172"/>
    </location>
</feature>
<feature type="glycosylation site" description="N-linked (GlcNAc...) asparagine" evidence="3">
    <location>
        <position position="198"/>
    </location>
</feature>
<feature type="glycosylation site" description="N-linked (GlcNAc...) asparagine" evidence="3">
    <location>
        <position position="267"/>
    </location>
</feature>
<feature type="glycosylation site" description="N-linked (GlcNAc...) asparagine" evidence="3">
    <location>
        <position position="321"/>
    </location>
</feature>
<feature type="glycosylation site" description="N-linked (GlcNAc...) asparagine" evidence="3">
    <location>
        <position position="414"/>
    </location>
</feature>
<feature type="glycosylation site" description="N-linked (GlcNAc...) asparagine" evidence="3">
    <location>
        <position position="421"/>
    </location>
</feature>
<feature type="glycosylation site" description="N-linked (GlcNAc...) asparagine" evidence="3">
    <location>
        <position position="479"/>
    </location>
</feature>
<feature type="glycosylation site" description="N-linked (GlcNAc...) asparagine" evidence="3">
    <location>
        <position position="544"/>
    </location>
</feature>
<feature type="glycosylation site" description="N-linked (GlcNAc...) asparagine" evidence="3">
    <location>
        <position position="574"/>
    </location>
</feature>
<feature type="glycosylation site" description="N-linked (GlcNAc...) asparagine" evidence="3">
    <location>
        <position position="598"/>
    </location>
</feature>
<feature type="glycosylation site" description="N-linked (GlcNAc...) asparagine" evidence="3">
    <location>
        <position position="652"/>
    </location>
</feature>
<feature type="glycosylation site" description="N-linked (GlcNAc...) asparagine" evidence="3">
    <location>
        <position position="721"/>
    </location>
</feature>
<feature type="glycosylation site" description="N-linked (GlcNAc...) asparagine" evidence="3">
    <location>
        <position position="829"/>
    </location>
</feature>
<feature type="glycosylation site" description="N-linked (GlcNAc...) asparagine" evidence="3">
    <location>
        <position position="1040"/>
    </location>
</feature>
<feature type="glycosylation site" description="N-linked (GlcNAc...) asparagine" evidence="3">
    <location>
        <position position="1096"/>
    </location>
</feature>
<feature type="glycosylation site" description="N-linked (GlcNAc...) asparagine" evidence="3">
    <location>
        <position position="1163"/>
    </location>
</feature>
<feature type="glycosylation site" description="N-linked (GlcNAc...) asparagine" evidence="3">
    <location>
        <position position="1185"/>
    </location>
</feature>
<feature type="glycosylation site" description="N-linked (GlcNAc...) asparagine" evidence="3">
    <location>
        <position position="1212"/>
    </location>
</feature>
<feature type="glycosylation site" description="N-linked (GlcNAc...) asparagine" evidence="3">
    <location>
        <position position="1274"/>
    </location>
</feature>
<feature type="glycosylation site" description="N-linked (GlcNAc...) asparagine" evidence="3">
    <location>
        <position position="1367"/>
    </location>
</feature>
<feature type="glycosylation site" description="N-linked (GlcNAc...) asparagine" evidence="3">
    <location>
        <position position="1470"/>
    </location>
</feature>
<feature type="glycosylation site" description="N-linked (GlcNAc...) asparagine" evidence="3">
    <location>
        <position position="1474"/>
    </location>
</feature>
<feature type="glycosylation site" description="N-linked (GlcNAc...) asparagine" evidence="3">
    <location>
        <position position="1518"/>
    </location>
</feature>
<feature type="splice variant" id="VSP_040484" description="In isoform 3." evidence="15">
    <original>MLSHGAGLALWITLSLLQ</original>
    <variation>MEAEFYMVILTCLIFRNSEGFQIVHVQKQQCLFKNEKVVVGSCNRTIQNQQWMWTEDEKLLHVKSALCLAISNSSRGPSRSAILDRCSQAPRWTCYDQEGFLEVENASLFLQKQGSRVVVKKARKYLHSWMKIDVNKEGKLVNESLCLQKAGLGAEVSVRSTRNTAPPQILTTFNAVPDGLVFLIRNTTEAFIRNAAENYSQNSSERQHPNLHMTGITDTSWVLSTTQPFSSTTEE</variation>
    <location>
        <begin position="1"/>
        <end position="18"/>
    </location>
</feature>
<feature type="splice variant" id="VSP_038521" description="In isoform 2." evidence="14">
    <location>
        <begin position="377"/>
        <end position="466"/>
    </location>
</feature>
<feature type="splice variant" id="VSP_053944" description="In isoform 4." evidence="14">
    <location>
        <begin position="997"/>
        <end position="1086"/>
    </location>
</feature>
<feature type="sequence variant" id="VAR_062251" description="In dbSNP:rs2252784." evidence="7 12">
    <original>R</original>
    <variation>K</variation>
    <location>
        <position position="94"/>
    </location>
</feature>
<feature type="sequence variant" id="VAR_062252" description="In dbSNP:rs2465811." evidence="12">
    <original>S</original>
    <variation>G</variation>
    <location>
        <position position="127"/>
    </location>
</feature>
<feature type="sequence variant" id="VAR_057135" description="In dbSNP:rs36027530.">
    <original>V</original>
    <variation>A</variation>
    <location>
        <position position="395"/>
    </location>
</feature>
<feature type="sequence variant" id="VAR_057136" description="In dbSNP:rs2165627.">
    <original>D</original>
    <variation>E</variation>
    <location>
        <position position="415"/>
    </location>
</feature>
<feature type="sequence variant" id="VAR_057137" description="In dbSNP:rs2304821.">
    <original>T</original>
    <variation>M</variation>
    <location>
        <position position="939"/>
    </location>
</feature>
<feature type="sequence variant" id="VAR_057138" description="In dbSNP:rs34902691.">
    <original>T</original>
    <variation>I</variation>
    <location>
        <position position="1032"/>
    </location>
</feature>
<feature type="sequence variant" id="VAR_057139" description="In dbSNP:rs17226367.">
    <original>G</original>
    <variation>A</variation>
    <location>
        <position position="1934"/>
    </location>
</feature>
<feature type="sequence conflict" description="In Ref. 1; CAA38066." evidence="16" ref="1">
    <original>T</original>
    <variation>S</variation>
    <location>
        <position position="261"/>
    </location>
</feature>
<feature type="sequence conflict" description="In Ref. 1; CAA38066." evidence="16" ref="1">
    <original>L</original>
    <variation>V</variation>
    <location>
        <position position="666"/>
    </location>
</feature>
<feature type="sequence conflict" description="In Ref. 2; BX648245." evidence="16" ref="2">
    <original>V</original>
    <variation>A</variation>
    <location>
        <position position="926"/>
    </location>
</feature>
<feature type="sequence conflict" description="In Ref. 1; CAA38066." evidence="16" ref="1">
    <original>C</original>
    <variation>R</variation>
    <location>
        <position position="1559"/>
    </location>
</feature>
<feature type="helix" evidence="19">
    <location>
        <begin position="1685"/>
        <end position="1687"/>
    </location>
</feature>
<feature type="helix" evidence="19">
    <location>
        <begin position="1688"/>
        <end position="1709"/>
    </location>
</feature>
<feature type="turn" evidence="19">
    <location>
        <begin position="1710"/>
        <end position="1716"/>
    </location>
</feature>
<feature type="turn" evidence="19">
    <location>
        <begin position="1720"/>
        <end position="1723"/>
    </location>
</feature>
<feature type="helix" evidence="19">
    <location>
        <begin position="1728"/>
        <end position="1730"/>
    </location>
</feature>
<feature type="helix" evidence="19">
    <location>
        <begin position="1740"/>
        <end position="1742"/>
    </location>
</feature>
<feature type="strand" evidence="19">
    <location>
        <begin position="1743"/>
        <end position="1745"/>
    </location>
</feature>
<feature type="helix" evidence="17">
    <location>
        <begin position="1753"/>
        <end position="1756"/>
    </location>
</feature>
<feature type="strand" evidence="19">
    <location>
        <begin position="1757"/>
        <end position="1763"/>
    </location>
</feature>
<feature type="strand" evidence="19">
    <location>
        <begin position="1766"/>
        <end position="1769"/>
    </location>
</feature>
<feature type="strand" evidence="19">
    <location>
        <begin position="1771"/>
        <end position="1775"/>
    </location>
</feature>
<feature type="turn" evidence="19">
    <location>
        <begin position="1780"/>
        <end position="1782"/>
    </location>
</feature>
<feature type="helix" evidence="19">
    <location>
        <begin position="1783"/>
        <end position="1792"/>
    </location>
</feature>
<feature type="strand" evidence="19">
    <location>
        <begin position="1797"/>
        <end position="1800"/>
    </location>
</feature>
<feature type="strand" evidence="19">
    <location>
        <begin position="1804"/>
        <end position="1806"/>
    </location>
</feature>
<feature type="strand" evidence="19">
    <location>
        <begin position="1818"/>
        <end position="1821"/>
    </location>
</feature>
<feature type="strand" evidence="19">
    <location>
        <begin position="1823"/>
        <end position="1825"/>
    </location>
</feature>
<feature type="strand" evidence="19">
    <location>
        <begin position="1828"/>
        <end position="1837"/>
    </location>
</feature>
<feature type="strand" evidence="19">
    <location>
        <begin position="1839"/>
        <end position="1849"/>
    </location>
</feature>
<feature type="strand" evidence="19">
    <location>
        <begin position="1856"/>
        <end position="1865"/>
    </location>
</feature>
<feature type="strand" evidence="19">
    <location>
        <begin position="1870"/>
        <end position="1872"/>
    </location>
</feature>
<feature type="helix" evidence="19">
    <location>
        <begin position="1877"/>
        <end position="1893"/>
    </location>
</feature>
<feature type="strand" evidence="18">
    <location>
        <begin position="1894"/>
        <end position="1896"/>
    </location>
</feature>
<feature type="strand" evidence="19">
    <location>
        <begin position="1900"/>
        <end position="1903"/>
    </location>
</feature>
<feature type="strand" evidence="19">
    <location>
        <begin position="1905"/>
        <end position="1908"/>
    </location>
</feature>
<feature type="helix" evidence="19">
    <location>
        <begin position="1909"/>
        <end position="1926"/>
    </location>
</feature>
<feature type="strand" evidence="19">
    <location>
        <begin position="1928"/>
        <end position="1930"/>
    </location>
</feature>
<feature type="helix" evidence="19">
    <location>
        <begin position="1932"/>
        <end position="1940"/>
    </location>
</feature>
<feature type="helix" evidence="19">
    <location>
        <begin position="1950"/>
        <end position="1968"/>
    </location>
</feature>
<sequence length="1997" mass="224301">MLSHGAGLALWITLSLLQTGLAEPERCNFTLAESKASSHSVSIQWRILGSPCNFSLIYSSDTLGAALCPTFRIDNTTYGCNLQDLQAGTIYNFRIISLDEERTVVLQTDPLPPARFGVSKEKTTSTSLHVWWTPSSGKVTSYEVQLFDENNQKIQGVQIQESTSWNEYTFFNLTAGSKYNIAITAVSGGKRSFSVYTNGSTVPSPVKDIGISTKANSLLISWSHGSGNVERYRLMLMDKGILVHGGVVDKHATSYAFHGLTPGYLYNLTVMTEAAGLQNYRWKLVRTAPMEVSNLKVTNDGSLTSLKVKWQRPPGNVDSYNITLSHKGTIKESRVLAPWITETHFKELVPGRLYQVTVSCVSGELSAQKMAVGRTFPDKVANLEANNNGRMRSLVVSWSPPAGDWEQYRILLFNDSVVLLNITVGKEETQYVMDDTGLVPGRQYEVEVIVESGNLKNSERCQGRTVPLAVLQLRVKHANETSLSIMWQTPVAEWEKYIISLADRDLLLIHKSLSKDAKEFTFTDLVPGRKYMATVTSISGDLKNSSSVKGRTVPAQVTDLHVANQGMTSSLFTNWTQAQGDVEFYQVLLIHENVVIKNESISSETSRYSFHSLKSGSLYSVVVTTVSGGISSRQVVVEGRTVPSSVSGVTVNNSGRNDYLSVSWLLAPGDVDNYEVTLSHDGKVVQSLVIAKSVRECSFSSLTPGRLYTVTITTRSGKYENHSFSQERTVPDKVQGVSVSNSARSDYLRVSWVHATGDFDHYEVTIKNKNNFIQTKSIPKSENECVFVQLVPGRLYSVTVTTKSGQYEANEQGNGRTIPEPVKDLTLRNRSTEDLHVTWSGANGDVDQYEIQLLFNDMKVFPPFHLVNTATEYRFTSLTPGRQYKILVLTISGDVQQSAFIEGFTVPSAVKNIHISPNGATDSLTVNWTPGGGDVDSYTVSAFRHSQKVDSQTIPKHVFEHTFHRLEAGEQYQIMIASVSGSLKNQINVVGRTVPASVQGVIADNAYSSYSLIVSWQKAAGVAERYDILLLTENGILLRNTSEPATTKQHKFEDLTPGKKYKIQILTVSGGLFSKEAQTEGRTVPAAVTDLRITENSTRHLSFRWTASEGELSWYNIFLYNPDGNLQERAQVDPLVQSFSFQNLLQGRMYKMVIVTHSGELSNESFIFGRTVPASVSHLRGSNRNTTDSLWFNWSPASGDFDFYELILYNPNGTKKENWKDKDLTEWRFQGLVPGRKYVLWVVTHSGDLSNKVTAESRTAPSPPSLMSFADIANTSLAITWKGPPDWTDYNDFELQWLPRDALTVFNPYNNRKSEGRIVYGLRPGRSYQFNVKTVSGDSWKTYSKPIFGSVRTKPDKIQNLHCRPQNSTAIACSWIPPDSDFDGYSIECRKMDTQEVEFSRKLEKEKSLLNIMMLVPHKRYLVSIKVQSAGMTSEVVEDSTITMIDRPPPPPPHIRVNEKDVLISKSSINFTVNCSWFSDTNGAVKYFTVVVREADGSDELKPEQQHPLPSYLEYRHNASIRVYQTNYFASKCAENPNSNSKSFNIKLGAEMESLGGKCDPTQQKFCDGPLKPHTAYRISIRAFTQLFDEDLKEFTKPLYSDTFFSLPITTESEPLFGAIEGVSAGLFLIGMLVAVVALLICRQKVSHGRERPSARLSIRRDRPLSVHLNLGQKGNRKTSCPIKINQFEGHFMKLQADSNYLLSKEYEELKDVGRNQSCDIALLPENRGKNRYNNILPYDATRVKLSNVDDDPCSDYINASYIPGNNFRREYIVTQGPLPGTKDDFWKMVWEQNVHNIVMVTQCVEKGRVKCDHYWPADQDSLYYGDLILQMLSESVLPEWTIREFKICGEEQLDAHRLIRHFHYTVWPDHGVPETTQSLIQFVRTVRDYINRSPGAGPTVVHCSAGVGRTGTFIALDRILQQLDSKDSVDIYGAVHDLRLHRVHMVQTECQYVYLHQCVRDVLRARKLRSEQENPLFPIYENVNPEYHRDPVYSRH</sequence>
<accession>P23467</accession>
<accession>B7ZKS8</accession>
<accession>B7ZKT0</accession>
<accession>C9JX87</accession>
<accession>F5H3G6</accession>
<accession>Q14D85</accession>
<accession>Q3MIV7</accession>
<gene>
    <name type="primary">PTPRB</name>
    <name type="synonym">PTPB</name>
</gene>
<dbReference type="EC" id="3.1.3.48"/>
<dbReference type="EMBL" id="X54131">
    <property type="protein sequence ID" value="CAA38066.1"/>
    <property type="molecule type" value="mRNA"/>
</dbReference>
<dbReference type="EMBL" id="BX648245">
    <property type="status" value="NOT_ANNOTATED_CDS"/>
    <property type="molecule type" value="mRNA"/>
</dbReference>
<dbReference type="EMBL" id="AC025569">
    <property type="status" value="NOT_ANNOTATED_CDS"/>
    <property type="molecule type" value="Genomic_DNA"/>
</dbReference>
<dbReference type="EMBL" id="AC083809">
    <property type="status" value="NOT_ANNOTATED_CDS"/>
    <property type="molecule type" value="Genomic_DNA"/>
</dbReference>
<dbReference type="EMBL" id="CH471054">
    <property type="protein sequence ID" value="EAW97254.1"/>
    <property type="molecule type" value="Genomic_DNA"/>
</dbReference>
<dbReference type="EMBL" id="BC101679">
    <property type="protein sequence ID" value="AAI01680.1"/>
    <property type="molecule type" value="mRNA"/>
</dbReference>
<dbReference type="EMBL" id="BC113463">
    <property type="protein sequence ID" value="AAI13464.1"/>
    <property type="molecule type" value="mRNA"/>
</dbReference>
<dbReference type="EMBL" id="BC143356">
    <property type="protein sequence ID" value="AAI43357.1"/>
    <property type="molecule type" value="mRNA"/>
</dbReference>
<dbReference type="EMBL" id="BC143360">
    <property type="protein sequence ID" value="AAI43361.1"/>
    <property type="molecule type" value="mRNA"/>
</dbReference>
<dbReference type="CCDS" id="CCDS44943.1">
    <molecule id="P23467-3"/>
</dbReference>
<dbReference type="CCDS" id="CCDS44944.1">
    <molecule id="P23467-1"/>
</dbReference>
<dbReference type="CCDS" id="CCDS55845.1">
    <molecule id="P23467-2"/>
</dbReference>
<dbReference type="CCDS" id="CCDS55846.1">
    <molecule id="P23467-4"/>
</dbReference>
<dbReference type="PIR" id="S12050">
    <property type="entry name" value="S12050"/>
</dbReference>
<dbReference type="RefSeq" id="NP_001103224.1">
    <molecule id="P23467-3"/>
    <property type="nucleotide sequence ID" value="NM_001109754.4"/>
</dbReference>
<dbReference type="RefSeq" id="NP_001193900.1">
    <molecule id="P23467-2"/>
    <property type="nucleotide sequence ID" value="NM_001206971.3"/>
</dbReference>
<dbReference type="RefSeq" id="NP_001193901.1">
    <molecule id="P23467-4"/>
    <property type="nucleotide sequence ID" value="NM_001206972.3"/>
</dbReference>
<dbReference type="RefSeq" id="NP_001317133.1">
    <property type="nucleotide sequence ID" value="NM_001330204.1"/>
</dbReference>
<dbReference type="RefSeq" id="NP_002828.3">
    <molecule id="P23467-1"/>
    <property type="nucleotide sequence ID" value="NM_002837.5"/>
</dbReference>
<dbReference type="PDB" id="2AHS">
    <property type="method" value="X-ray"/>
    <property type="resolution" value="2.10 A"/>
    <property type="chains" value="A/B=1686-1971"/>
</dbReference>
<dbReference type="PDB" id="2H02">
    <property type="method" value="X-ray"/>
    <property type="resolution" value="2.30 A"/>
    <property type="chains" value="A/B=1662-1973"/>
</dbReference>
<dbReference type="PDB" id="2H03">
    <property type="method" value="X-ray"/>
    <property type="resolution" value="1.65 A"/>
    <property type="chains" value="A=1676-1970"/>
</dbReference>
<dbReference type="PDB" id="2H04">
    <property type="method" value="X-ray"/>
    <property type="resolution" value="2.30 A"/>
    <property type="chains" value="A=1662-1973"/>
</dbReference>
<dbReference type="PDB" id="2HC1">
    <property type="method" value="X-ray"/>
    <property type="resolution" value="1.30 A"/>
    <property type="chains" value="A=1676-1970"/>
</dbReference>
<dbReference type="PDB" id="2HC2">
    <property type="method" value="X-ray"/>
    <property type="resolution" value="1.40 A"/>
    <property type="chains" value="A=1676-1970"/>
</dbReference>
<dbReference type="PDB" id="2I3R">
    <property type="method" value="X-ray"/>
    <property type="resolution" value="1.85 A"/>
    <property type="chains" value="A/B=1662-1973"/>
</dbReference>
<dbReference type="PDB" id="2I3U">
    <property type="method" value="X-ray"/>
    <property type="resolution" value="1.85 A"/>
    <property type="chains" value="A=1662-1973"/>
</dbReference>
<dbReference type="PDB" id="2I4E">
    <property type="method" value="X-ray"/>
    <property type="resolution" value="1.75 A"/>
    <property type="chains" value="A/B=1662-1973"/>
</dbReference>
<dbReference type="PDB" id="2I4G">
    <property type="method" value="X-ray"/>
    <property type="resolution" value="1.65 A"/>
    <property type="chains" value="A=1662-1973"/>
</dbReference>
<dbReference type="PDB" id="2I4H">
    <property type="method" value="X-ray"/>
    <property type="resolution" value="2.15 A"/>
    <property type="chains" value="A=1662-1973"/>
</dbReference>
<dbReference type="PDB" id="2I5X">
    <property type="method" value="X-ray"/>
    <property type="resolution" value="1.70 A"/>
    <property type="chains" value="A/B=1662-1973"/>
</dbReference>
<dbReference type="PDB" id="8JBN">
    <property type="method" value="X-ray"/>
    <property type="resolution" value="1.99 A"/>
    <property type="chains" value="A/B=1686-1971"/>
</dbReference>
<dbReference type="PDB" id="8JBY">
    <property type="method" value="X-ray"/>
    <property type="resolution" value="1.99 A"/>
    <property type="chains" value="A/B=1686-1971"/>
</dbReference>
<dbReference type="PDBsum" id="2AHS"/>
<dbReference type="PDBsum" id="2H02"/>
<dbReference type="PDBsum" id="2H03"/>
<dbReference type="PDBsum" id="2H04"/>
<dbReference type="PDBsum" id="2HC1"/>
<dbReference type="PDBsum" id="2HC2"/>
<dbReference type="PDBsum" id="2I3R"/>
<dbReference type="PDBsum" id="2I3U"/>
<dbReference type="PDBsum" id="2I4E"/>
<dbReference type="PDBsum" id="2I4G"/>
<dbReference type="PDBsum" id="2I4H"/>
<dbReference type="PDBsum" id="2I5X"/>
<dbReference type="PDBsum" id="8JBN"/>
<dbReference type="PDBsum" id="8JBY"/>
<dbReference type="SMR" id="P23467"/>
<dbReference type="BioGRID" id="111751">
    <property type="interactions" value="33"/>
</dbReference>
<dbReference type="CORUM" id="P23467"/>
<dbReference type="FunCoup" id="P23467">
    <property type="interactions" value="280"/>
</dbReference>
<dbReference type="IntAct" id="P23467">
    <property type="interactions" value="50"/>
</dbReference>
<dbReference type="MINT" id="P23467"/>
<dbReference type="STRING" id="9606.ENSP00000334928"/>
<dbReference type="BindingDB" id="P23467"/>
<dbReference type="ChEMBL" id="CHEMBL2706"/>
<dbReference type="DrugBank" id="DB08678">
    <property type="generic name" value="(4-ETHYLPHENYL)SULFAMIC ACID"/>
</dbReference>
<dbReference type="DrugBank" id="DB07068">
    <property type="generic name" value="(4-{4-[(TERT-BUTOXYCARBONYL)AMINO]-2,2-BIS(ETHOXYCARBONYL)BUTYL}PHENYL)SULFAMIC ACID"/>
</dbReference>
<dbReference type="DrugBank" id="DB16353">
    <property type="generic name" value="Razuprotafib"/>
</dbReference>
<dbReference type="DrugBank" id="DB07127">
    <property type="generic name" value="{4-[2,2-BIS(5-METHYL-1,2,4-OXADIAZOL-3-YL)-3-PHENYLPROPYL]PHENYL}SULFAMIC ACID"/>
</dbReference>
<dbReference type="DrugBank" id="DB06989">
    <property type="generic name" value="{4-[2-BENZYL-3-METHOXY-2-(METHOXYCARBONYL)-3-OXOPROPYL]PHENYL}SULFAMIC ACID"/>
</dbReference>
<dbReference type="GuidetoPHARMACOLOGY" id="1851"/>
<dbReference type="DEPOD" id="PTPRB"/>
<dbReference type="GlyCosmos" id="P23467">
    <property type="glycosylation" value="26 sites, No reported glycans"/>
</dbReference>
<dbReference type="GlyGen" id="P23467">
    <property type="glycosylation" value="28 sites, 1 O-linked glycan (1 site)"/>
</dbReference>
<dbReference type="iPTMnet" id="P23467"/>
<dbReference type="PhosphoSitePlus" id="P23467"/>
<dbReference type="BioMuta" id="PTPRB"/>
<dbReference type="DMDM" id="317373518"/>
<dbReference type="jPOST" id="P23467"/>
<dbReference type="MassIVE" id="P23467"/>
<dbReference type="PaxDb" id="9606-ENSP00000334928"/>
<dbReference type="PeptideAtlas" id="P23467"/>
<dbReference type="ProteomicsDB" id="26267"/>
<dbReference type="ProteomicsDB" id="54098">
    <molecule id="P23467-1"/>
</dbReference>
<dbReference type="ProteomicsDB" id="54099">
    <molecule id="P23467-2"/>
</dbReference>
<dbReference type="ProteomicsDB" id="54100">
    <molecule id="P23467-3"/>
</dbReference>
<dbReference type="Pumba" id="P23467"/>
<dbReference type="Antibodypedia" id="29475">
    <property type="antibodies" value="110 antibodies from 24 providers"/>
</dbReference>
<dbReference type="DNASU" id="5787"/>
<dbReference type="Ensembl" id="ENST00000261266.9">
    <molecule id="P23467-1"/>
    <property type="protein sequence ID" value="ENSP00000261266.5"/>
    <property type="gene ID" value="ENSG00000127329.16"/>
</dbReference>
<dbReference type="Ensembl" id="ENST00000334414.11">
    <molecule id="P23467-3"/>
    <property type="protein sequence ID" value="ENSP00000334928.6"/>
    <property type="gene ID" value="ENSG00000127329.16"/>
</dbReference>
<dbReference type="Ensembl" id="ENST00000538708.5">
    <molecule id="P23467-4"/>
    <property type="protein sequence ID" value="ENSP00000438927.1"/>
    <property type="gene ID" value="ENSG00000127329.16"/>
</dbReference>
<dbReference type="Ensembl" id="ENST00000550857.5">
    <molecule id="P23467-2"/>
    <property type="protein sequence ID" value="ENSP00000447302.1"/>
    <property type="gene ID" value="ENSG00000127329.16"/>
</dbReference>
<dbReference type="GeneID" id="5787"/>
<dbReference type="KEGG" id="hsa:5787"/>
<dbReference type="MANE-Select" id="ENST00000334414.11">
    <molecule id="P23467-3"/>
    <property type="protein sequence ID" value="ENSP00000334928.6"/>
    <property type="RefSeq nucleotide sequence ID" value="NM_001109754.4"/>
    <property type="RefSeq protein sequence ID" value="NP_001103224.1"/>
</dbReference>
<dbReference type="UCSC" id="uc001swb.6">
    <molecule id="P23467-1"/>
    <property type="organism name" value="human"/>
</dbReference>
<dbReference type="AGR" id="HGNC:9665"/>
<dbReference type="CTD" id="5787"/>
<dbReference type="DisGeNET" id="5787"/>
<dbReference type="GeneCards" id="PTPRB"/>
<dbReference type="HGNC" id="HGNC:9665">
    <property type="gene designation" value="PTPRB"/>
</dbReference>
<dbReference type="HPA" id="ENSG00000127329">
    <property type="expression patterns" value="Low tissue specificity"/>
</dbReference>
<dbReference type="MIM" id="176882">
    <property type="type" value="gene"/>
</dbReference>
<dbReference type="neXtProt" id="NX_P23467"/>
<dbReference type="OpenTargets" id="ENSG00000127329"/>
<dbReference type="PharmGKB" id="PA34010"/>
<dbReference type="VEuPathDB" id="HostDB:ENSG00000127329"/>
<dbReference type="eggNOG" id="KOG0791">
    <property type="taxonomic scope" value="Eukaryota"/>
</dbReference>
<dbReference type="GeneTree" id="ENSGT00940000156088"/>
<dbReference type="HOGENOM" id="CLU_000787_0_0_1"/>
<dbReference type="InParanoid" id="P23467"/>
<dbReference type="OMA" id="HLRTGQC"/>
<dbReference type="OrthoDB" id="10057517at2759"/>
<dbReference type="PAN-GO" id="P23467">
    <property type="GO annotations" value="4 GO annotations based on evolutionary models"/>
</dbReference>
<dbReference type="PhylomeDB" id="P23467"/>
<dbReference type="TreeFam" id="TF351926"/>
<dbReference type="BRENDA" id="3.1.3.48">
    <property type="organism ID" value="2681"/>
</dbReference>
<dbReference type="PathwayCommons" id="P23467"/>
<dbReference type="Reactome" id="R-HSA-6798695">
    <property type="pathway name" value="Neutrophil degranulation"/>
</dbReference>
<dbReference type="SignaLink" id="P23467"/>
<dbReference type="SIGNOR" id="P23467"/>
<dbReference type="BioGRID-ORCS" id="5787">
    <property type="hits" value="10 hits in 1176 CRISPR screens"/>
</dbReference>
<dbReference type="ChiTaRS" id="PTPRB">
    <property type="organism name" value="human"/>
</dbReference>
<dbReference type="EvolutionaryTrace" id="P23467"/>
<dbReference type="GeneWiki" id="PTPRB"/>
<dbReference type="GenomeRNAi" id="5787"/>
<dbReference type="Pharos" id="P23467">
    <property type="development level" value="Tchem"/>
</dbReference>
<dbReference type="PRO" id="PR:P23467"/>
<dbReference type="Proteomes" id="UP000005640">
    <property type="component" value="Chromosome 12"/>
</dbReference>
<dbReference type="RNAct" id="P23467">
    <property type="molecule type" value="protein"/>
</dbReference>
<dbReference type="Bgee" id="ENSG00000127329">
    <property type="expression patterns" value="Expressed in endothelial cell and 183 other cell types or tissues"/>
</dbReference>
<dbReference type="ExpressionAtlas" id="P23467">
    <property type="expression patterns" value="baseline and differential"/>
</dbReference>
<dbReference type="GO" id="GO:0005886">
    <property type="term" value="C:plasma membrane"/>
    <property type="evidence" value="ECO:0000304"/>
    <property type="project" value="Reactome"/>
</dbReference>
<dbReference type="GO" id="GO:0043235">
    <property type="term" value="C:receptor complex"/>
    <property type="evidence" value="ECO:0000314"/>
    <property type="project" value="MGI"/>
</dbReference>
<dbReference type="GO" id="GO:0035579">
    <property type="term" value="C:specific granule membrane"/>
    <property type="evidence" value="ECO:0000304"/>
    <property type="project" value="Reactome"/>
</dbReference>
<dbReference type="GO" id="GO:0070821">
    <property type="term" value="C:tertiary granule membrane"/>
    <property type="evidence" value="ECO:0000304"/>
    <property type="project" value="Reactome"/>
</dbReference>
<dbReference type="GO" id="GO:0045296">
    <property type="term" value="F:cadherin binding"/>
    <property type="evidence" value="ECO:0000353"/>
    <property type="project" value="ARUK-UCL"/>
</dbReference>
<dbReference type="GO" id="GO:0005001">
    <property type="term" value="F:transmembrane receptor protein tyrosine phosphatase activity"/>
    <property type="evidence" value="ECO:0000304"/>
    <property type="project" value="ProtInc"/>
</dbReference>
<dbReference type="GO" id="GO:0001525">
    <property type="term" value="P:angiogenesis"/>
    <property type="evidence" value="ECO:0000318"/>
    <property type="project" value="GO_Central"/>
</dbReference>
<dbReference type="GO" id="GO:0016311">
    <property type="term" value="P:dephosphorylation"/>
    <property type="evidence" value="ECO:0000314"/>
    <property type="project" value="UniProtKB"/>
</dbReference>
<dbReference type="GO" id="GO:0008347">
    <property type="term" value="P:glial cell migration"/>
    <property type="evidence" value="ECO:0007669"/>
    <property type="project" value="Ensembl"/>
</dbReference>
<dbReference type="GO" id="GO:0001649">
    <property type="term" value="P:osteoblast differentiation"/>
    <property type="evidence" value="ECO:0000314"/>
    <property type="project" value="UniProt"/>
</dbReference>
<dbReference type="GO" id="GO:0006796">
    <property type="term" value="P:phosphate-containing compound metabolic process"/>
    <property type="evidence" value="ECO:0000304"/>
    <property type="project" value="ProtInc"/>
</dbReference>
<dbReference type="GO" id="GO:0006470">
    <property type="term" value="P:protein dephosphorylation"/>
    <property type="evidence" value="ECO:0000304"/>
    <property type="project" value="ProtInc"/>
</dbReference>
<dbReference type="CDD" id="cd00063">
    <property type="entry name" value="FN3"/>
    <property type="match status" value="11"/>
</dbReference>
<dbReference type="CDD" id="cd14617">
    <property type="entry name" value="R-PTPc-B"/>
    <property type="match status" value="1"/>
</dbReference>
<dbReference type="FunFam" id="2.60.40.10:FF:000369">
    <property type="entry name" value="Protein tyrosine phosphatase, receptor type B"/>
    <property type="match status" value="7"/>
</dbReference>
<dbReference type="FunFam" id="2.60.40.10:FF:001218">
    <property type="entry name" value="Protein tyrosine phosphatase, receptor type B"/>
    <property type="match status" value="1"/>
</dbReference>
<dbReference type="FunFam" id="2.60.40.10:FF:001293">
    <property type="entry name" value="Protein tyrosine phosphatase, receptor type B"/>
    <property type="match status" value="1"/>
</dbReference>
<dbReference type="FunFam" id="2.60.40.10:FF:001376">
    <property type="entry name" value="Protein tyrosine phosphatase, receptor type B"/>
    <property type="match status" value="1"/>
</dbReference>
<dbReference type="FunFam" id="2.60.40.10:FF:001411">
    <property type="entry name" value="Protein tyrosine phosphatase, receptor type B"/>
    <property type="match status" value="1"/>
</dbReference>
<dbReference type="FunFam" id="2.60.40.10:FF:001778">
    <property type="entry name" value="Protein tyrosine phosphatase, receptor type B"/>
    <property type="match status" value="1"/>
</dbReference>
<dbReference type="FunFam" id="2.60.40.10:FF:001813">
    <property type="entry name" value="Protein tyrosine phosphatase, receptor type B"/>
    <property type="match status" value="1"/>
</dbReference>
<dbReference type="FunFam" id="3.90.190.10:FF:000009">
    <property type="entry name" value="Receptor-type tyrosine-protein phosphatase beta"/>
    <property type="match status" value="1"/>
</dbReference>
<dbReference type="FunFam" id="2.60.40.10:FF:001331">
    <property type="entry name" value="receptor-type tyrosine-protein phosphatase beta isoform X2"/>
    <property type="match status" value="1"/>
</dbReference>
<dbReference type="FunFam" id="2.60.40.10:FF:002278">
    <property type="entry name" value="receptor-type tyrosine-protein phosphatase beta isoform X2"/>
    <property type="match status" value="1"/>
</dbReference>
<dbReference type="Gene3D" id="2.60.40.10">
    <property type="entry name" value="Immunoglobulins"/>
    <property type="match status" value="15"/>
</dbReference>
<dbReference type="Gene3D" id="3.90.190.10">
    <property type="entry name" value="Protein tyrosine phosphatase superfamily"/>
    <property type="match status" value="1"/>
</dbReference>
<dbReference type="InterPro" id="IPR003961">
    <property type="entry name" value="FN3_dom"/>
</dbReference>
<dbReference type="InterPro" id="IPR036116">
    <property type="entry name" value="FN3_sf"/>
</dbReference>
<dbReference type="InterPro" id="IPR013783">
    <property type="entry name" value="Ig-like_fold"/>
</dbReference>
<dbReference type="InterPro" id="IPR029021">
    <property type="entry name" value="Prot-tyrosine_phosphatase-like"/>
</dbReference>
<dbReference type="InterPro" id="IPR000242">
    <property type="entry name" value="PTP_cat"/>
</dbReference>
<dbReference type="InterPro" id="IPR041201">
    <property type="entry name" value="PTPRJ_TM"/>
</dbReference>
<dbReference type="InterPro" id="IPR050713">
    <property type="entry name" value="RTP_Phos/Ushers"/>
</dbReference>
<dbReference type="InterPro" id="IPR016130">
    <property type="entry name" value="Tyr_Pase_AS"/>
</dbReference>
<dbReference type="InterPro" id="IPR003595">
    <property type="entry name" value="Tyr_Pase_cat"/>
</dbReference>
<dbReference type="InterPro" id="IPR000387">
    <property type="entry name" value="Tyr_Pase_dom"/>
</dbReference>
<dbReference type="PANTHER" id="PTHR46957">
    <property type="entry name" value="CYTOKINE RECEPTOR"/>
    <property type="match status" value="1"/>
</dbReference>
<dbReference type="PANTHER" id="PTHR46957:SF2">
    <property type="entry name" value="RECEPTOR-TYPE TYROSINE-PROTEIN PHOSPHATASE BETA"/>
    <property type="match status" value="1"/>
</dbReference>
<dbReference type="Pfam" id="PF00041">
    <property type="entry name" value="fn3"/>
    <property type="match status" value="15"/>
</dbReference>
<dbReference type="Pfam" id="PF18861">
    <property type="entry name" value="PTP_tm"/>
    <property type="match status" value="1"/>
</dbReference>
<dbReference type="Pfam" id="PF00102">
    <property type="entry name" value="Y_phosphatase"/>
    <property type="match status" value="1"/>
</dbReference>
<dbReference type="PRINTS" id="PR00700">
    <property type="entry name" value="PRTYPHPHTASE"/>
</dbReference>
<dbReference type="SMART" id="SM00060">
    <property type="entry name" value="FN3"/>
    <property type="match status" value="17"/>
</dbReference>
<dbReference type="SMART" id="SM00194">
    <property type="entry name" value="PTPc"/>
    <property type="match status" value="1"/>
</dbReference>
<dbReference type="SMART" id="SM00404">
    <property type="entry name" value="PTPc_motif"/>
    <property type="match status" value="1"/>
</dbReference>
<dbReference type="SUPFAM" id="SSF52799">
    <property type="entry name" value="(Phosphotyrosine protein) phosphatases II"/>
    <property type="match status" value="1"/>
</dbReference>
<dbReference type="SUPFAM" id="SSF49265">
    <property type="entry name" value="Fibronectin type III"/>
    <property type="match status" value="16"/>
</dbReference>
<dbReference type="PROSITE" id="PS50853">
    <property type="entry name" value="FN3"/>
    <property type="match status" value="12"/>
</dbReference>
<dbReference type="PROSITE" id="PS00383">
    <property type="entry name" value="TYR_PHOSPHATASE_1"/>
    <property type="match status" value="1"/>
</dbReference>
<dbReference type="PROSITE" id="PS50056">
    <property type="entry name" value="TYR_PHOSPHATASE_2"/>
    <property type="match status" value="1"/>
</dbReference>
<dbReference type="PROSITE" id="PS50055">
    <property type="entry name" value="TYR_PHOSPHATASE_PTP"/>
    <property type="match status" value="1"/>
</dbReference>
<name>PTPRB_HUMAN</name>
<evidence type="ECO:0000250" key="1"/>
<evidence type="ECO:0000250" key="2">
    <source>
        <dbReference type="UniProtKB" id="B2RU80"/>
    </source>
</evidence>
<evidence type="ECO:0000255" key="3"/>
<evidence type="ECO:0000255" key="4">
    <source>
        <dbReference type="PROSITE-ProRule" id="PRU00160"/>
    </source>
</evidence>
<evidence type="ECO:0000255" key="5">
    <source>
        <dbReference type="PROSITE-ProRule" id="PRU00316"/>
    </source>
</evidence>
<evidence type="ECO:0000255" key="6">
    <source>
        <dbReference type="PROSITE-ProRule" id="PRU10044"/>
    </source>
</evidence>
<evidence type="ECO:0000269" key="7">
    <source>
    </source>
</evidence>
<evidence type="ECO:0000269" key="8">
    <source>
    </source>
</evidence>
<evidence type="ECO:0000269" key="9">
    <source>
    </source>
</evidence>
<evidence type="ECO:0000269" key="10">
    <source>
    </source>
</evidence>
<evidence type="ECO:0000269" key="11">
    <source>
    </source>
</evidence>
<evidence type="ECO:0000269" key="12">
    <source>
    </source>
</evidence>
<evidence type="ECO:0000269" key="13">
    <source>
    </source>
</evidence>
<evidence type="ECO:0000303" key="14">
    <source>
    </source>
</evidence>
<evidence type="ECO:0000303" key="15">
    <source>
    </source>
</evidence>
<evidence type="ECO:0000305" key="16"/>
<evidence type="ECO:0007829" key="17">
    <source>
        <dbReference type="PDB" id="2AHS"/>
    </source>
</evidence>
<evidence type="ECO:0007829" key="18">
    <source>
        <dbReference type="PDB" id="2H03"/>
    </source>
</evidence>
<evidence type="ECO:0007829" key="19">
    <source>
        <dbReference type="PDB" id="2HC1"/>
    </source>
</evidence>